<evidence type="ECO:0000250" key="1">
    <source>
        <dbReference type="UniProtKB" id="Q9CQ75"/>
    </source>
</evidence>
<evidence type="ECO:0000269" key="2">
    <source>
    </source>
</evidence>
<evidence type="ECO:0000269" key="3">
    <source>
    </source>
</evidence>
<evidence type="ECO:0000269" key="4">
    <source>
    </source>
</evidence>
<evidence type="ECO:0000269" key="5">
    <source>
    </source>
</evidence>
<evidence type="ECO:0000269" key="6">
    <source>
    </source>
</evidence>
<evidence type="ECO:0000303" key="7">
    <source ref="3"/>
</evidence>
<evidence type="ECO:0000305" key="8"/>
<evidence type="ECO:0000305" key="9">
    <source>
    </source>
</evidence>
<evidence type="ECO:0007744" key="10">
    <source>
    </source>
</evidence>
<evidence type="ECO:0007829" key="11">
    <source>
        <dbReference type="PDB" id="1S3A"/>
    </source>
</evidence>
<evidence type="ECO:0007829" key="12">
    <source>
        <dbReference type="PDB" id="5XTB"/>
    </source>
</evidence>
<comment type="function">
    <text evidence="6">Accessory subunit of the mitochondrial membrane respiratory chain NADH dehydrogenase (Complex I), that is believed not to be involved in catalysis. Complex I functions in the transfer of electrons from NADH to the respiratory chain. The immediate electron acceptor for the enzyme is believed to be ubiquinone.</text>
</comment>
<comment type="subunit">
    <text evidence="2 6">Complex I is composed of 45 different subunits.</text>
</comment>
<comment type="subcellular location">
    <subcellularLocation>
        <location evidence="9">Mitochondrion inner membrane</location>
        <topology evidence="8">Peripheral membrane protein</topology>
        <orientation evidence="8">Matrix side</orientation>
    </subcellularLocation>
</comment>
<comment type="alternative products">
    <event type="alternative splicing"/>
    <isoform>
        <id>O43678-1</id>
        <name>1</name>
        <sequence type="displayed"/>
    </isoform>
    <isoform>
        <id>O43678-2</id>
        <name>2</name>
        <sequence type="described" ref="VSP_045479"/>
    </isoform>
</comment>
<comment type="disease" evidence="5">
    <disease id="DI-05410">
        <name>Mitochondrial complex I deficiency, nuclear type 13</name>
        <acronym>MC1DN13</acronym>
        <description>A form of mitochondrial complex I deficiency, the most common biochemical signature of mitochondrial disorders, a group of highly heterogeneous conditions characterized by defective oxidative phosphorylation, which collectively affects 1 in 5-10000 live births. Clinical disorders have variable severity, ranging from lethal neonatal disease to adult-onset neurodegenerative disorders. Phenotypes include macrocephaly with progressive leukodystrophy, non-specific encephalopathy, cardiomyopathy, myopathy, liver disease, Leigh syndrome, Leber hereditary optic neuropathy, and some forms of Parkinson disease. MC1DN13 transmission pattern is consistent with autosomal recessive inheritance.</description>
        <dbReference type="MIM" id="618235"/>
    </disease>
    <text>The disease is caused by variants affecting the gene represented in this entry.</text>
</comment>
<comment type="similarity">
    <text evidence="8">Belongs to the complex I NDUFA2 subunit family.</text>
</comment>
<name>NDUA2_HUMAN</name>
<sequence>MAAAAASRGVGAKLGLREIRIHLCQRSPGSQGVRDFIEKRYVELKKANPDLPILIRECSDVQPKLWARYAFGQETNVPLNNFSADQVTRALENVLSGKA</sequence>
<reference key="1">
    <citation type="journal article" date="1997" name="Biochem. Biophys. Res. Commun.">
        <title>Identification and primary structure of five human NADH-ubiquinone oxidoreductase subunits.</title>
        <authorList>
            <person name="Ton C."/>
            <person name="Hwang D.M."/>
            <person name="Dempsey A.A."/>
            <person name="Liew C.-C."/>
        </authorList>
    </citation>
    <scope>NUCLEOTIDE SEQUENCE [MRNA] (ISOFORM 1)</scope>
    <source>
        <tissue>Heart</tissue>
    </source>
</reference>
<reference key="2">
    <citation type="submission" date="2001-01" db="EMBL/GenBank/DDBJ databases">
        <authorList>
            <person name="Iida A."/>
            <person name="Kondo K."/>
            <person name="Kitamoto T."/>
            <person name="Kitamura Y."/>
            <person name="Mishima C."/>
            <person name="Osawa K."/>
            <person name="Nakamura Y."/>
        </authorList>
    </citation>
    <scope>NUCLEOTIDE SEQUENCE [GENOMIC DNA]</scope>
    <source>
        <tissue>Thymus</tissue>
    </source>
</reference>
<reference key="3">
    <citation type="submission" date="2000-10" db="EMBL/GenBank/DDBJ databases">
        <title>ADBCGF02_ADB Homo sapiens cDNA clone ADBCGF02 5',mRNA sequence.</title>
        <authorList>
            <person name="Peng Y."/>
            <person name="Song H."/>
            <person name="Huang Q."/>
            <person name="Huang C."/>
            <person name="Gu Y."/>
            <person name="Yang Y."/>
            <person name="Gao G."/>
            <person name="Xiao H."/>
            <person name="Xu X."/>
            <person name="Li N."/>
            <person name="Qian B."/>
            <person name="Liu F."/>
            <person name="Qu J."/>
            <person name="Gao X."/>
            <person name="Cheng Z."/>
            <person name="Xu Z."/>
            <person name="Zeng L."/>
            <person name="Xu S."/>
            <person name="Gu W."/>
            <person name="Tu Y."/>
            <person name="Jia J."/>
            <person name="Fu G."/>
            <person name="Ren S."/>
            <person name="Zhong M."/>
            <person name="Lu G."/>
            <person name="Hu R."/>
            <person name="Chen J."/>
            <person name="Chen Z."/>
            <person name="Han Z."/>
        </authorList>
    </citation>
    <scope>NUCLEOTIDE SEQUENCE [MRNA] (ISOFORM 2)</scope>
    <source>
        <tissue>Adrenal gland</tissue>
    </source>
</reference>
<reference key="4">
    <citation type="journal article" date="2000" name="Genome Res.">
        <title>Cloning and functional analysis of cDNAs with open reading frames for 300 previously undefined genes expressed in CD34+ hematopoietic stem/progenitor cells.</title>
        <authorList>
            <person name="Zhang Q.-H."/>
            <person name="Ye M."/>
            <person name="Wu X.-Y."/>
            <person name="Ren S.-X."/>
            <person name="Zhao M."/>
            <person name="Zhao C.-J."/>
            <person name="Fu G."/>
            <person name="Shen Y."/>
            <person name="Fan H.-Y."/>
            <person name="Lu G."/>
            <person name="Zhong M."/>
            <person name="Xu X.-R."/>
            <person name="Han Z.-G."/>
            <person name="Zhang J.-W."/>
            <person name="Tao J."/>
            <person name="Huang Q.-H."/>
            <person name="Zhou J."/>
            <person name="Hu G.-X."/>
            <person name="Gu J."/>
            <person name="Chen S.-J."/>
            <person name="Chen Z."/>
        </authorList>
    </citation>
    <scope>NUCLEOTIDE SEQUENCE [LARGE SCALE MRNA] (ISOFORM 1)</scope>
    <source>
        <tissue>Umbilical cord blood</tissue>
    </source>
</reference>
<reference key="5">
    <citation type="submission" date="2004-06" db="EMBL/GenBank/DDBJ databases">
        <title>Cloning of human full open reading frames in Gateway(TM) system entry vector (pDONR201).</title>
        <authorList>
            <person name="Ebert L."/>
            <person name="Schick M."/>
            <person name="Neubert P."/>
            <person name="Schatten R."/>
            <person name="Henze S."/>
            <person name="Korn B."/>
        </authorList>
    </citation>
    <scope>NUCLEOTIDE SEQUENCE [LARGE SCALE MRNA] (ISOFORM 1)</scope>
</reference>
<reference key="6">
    <citation type="journal article" date="2004" name="Nature">
        <title>The DNA sequence and comparative analysis of human chromosome 5.</title>
        <authorList>
            <person name="Schmutz J."/>
            <person name="Martin J."/>
            <person name="Terry A."/>
            <person name="Couronne O."/>
            <person name="Grimwood J."/>
            <person name="Lowry S."/>
            <person name="Gordon L.A."/>
            <person name="Scott D."/>
            <person name="Xie G."/>
            <person name="Huang W."/>
            <person name="Hellsten U."/>
            <person name="Tran-Gyamfi M."/>
            <person name="She X."/>
            <person name="Prabhakar S."/>
            <person name="Aerts A."/>
            <person name="Altherr M."/>
            <person name="Bajorek E."/>
            <person name="Black S."/>
            <person name="Branscomb E."/>
            <person name="Caoile C."/>
            <person name="Challacombe J.F."/>
            <person name="Chan Y.M."/>
            <person name="Denys M."/>
            <person name="Detter J.C."/>
            <person name="Escobar J."/>
            <person name="Flowers D."/>
            <person name="Fotopulos D."/>
            <person name="Glavina T."/>
            <person name="Gomez M."/>
            <person name="Gonzales E."/>
            <person name="Goodstein D."/>
            <person name="Grigoriev I."/>
            <person name="Groza M."/>
            <person name="Hammon N."/>
            <person name="Hawkins T."/>
            <person name="Haydu L."/>
            <person name="Israni S."/>
            <person name="Jett J."/>
            <person name="Kadner K."/>
            <person name="Kimball H."/>
            <person name="Kobayashi A."/>
            <person name="Lopez F."/>
            <person name="Lou Y."/>
            <person name="Martinez D."/>
            <person name="Medina C."/>
            <person name="Morgan J."/>
            <person name="Nandkeshwar R."/>
            <person name="Noonan J.P."/>
            <person name="Pitluck S."/>
            <person name="Pollard M."/>
            <person name="Predki P."/>
            <person name="Priest J."/>
            <person name="Ramirez L."/>
            <person name="Retterer J."/>
            <person name="Rodriguez A."/>
            <person name="Rogers S."/>
            <person name="Salamov A."/>
            <person name="Salazar A."/>
            <person name="Thayer N."/>
            <person name="Tice H."/>
            <person name="Tsai M."/>
            <person name="Ustaszewska A."/>
            <person name="Vo N."/>
            <person name="Wheeler J."/>
            <person name="Wu K."/>
            <person name="Yang J."/>
            <person name="Dickson M."/>
            <person name="Cheng J.-F."/>
            <person name="Eichler E.E."/>
            <person name="Olsen A."/>
            <person name="Pennacchio L.A."/>
            <person name="Rokhsar D.S."/>
            <person name="Richardson P."/>
            <person name="Lucas S.M."/>
            <person name="Myers R.M."/>
            <person name="Rubin E.M."/>
        </authorList>
    </citation>
    <scope>NUCLEOTIDE SEQUENCE [LARGE SCALE GENOMIC DNA]</scope>
</reference>
<reference key="7">
    <citation type="journal article" date="2004" name="Genome Res.">
        <title>The status, quality, and expansion of the NIH full-length cDNA project: the Mammalian Gene Collection (MGC).</title>
        <authorList>
            <consortium name="The MGC Project Team"/>
        </authorList>
    </citation>
    <scope>NUCLEOTIDE SEQUENCE [LARGE SCALE MRNA] (ISOFORM 1)</scope>
    <source>
        <tissue>Kidney</tissue>
    </source>
</reference>
<reference key="8">
    <citation type="journal article" date="2003" name="J. Biol. Chem.">
        <title>The subunit composition of the human NADH dehydrogenase obtained by rapid one-step immunopurification.</title>
        <authorList>
            <person name="Murray J."/>
            <person name="Zhang B."/>
            <person name="Taylor S.W."/>
            <person name="Oglesbee D."/>
            <person name="Fahy E."/>
            <person name="Marusich M.F."/>
            <person name="Ghosh S.S."/>
            <person name="Capaldi R.A."/>
        </authorList>
    </citation>
    <scope>IDENTIFICATION IN THE NADH-UBIQUINONE OXIDOREDUCTASE COMPLEX</scope>
    <scope>IDENTIFICATION BY MASS SPECTROMETRY</scope>
</reference>
<reference key="9">
    <citation type="journal article" date="2008" name="Am. J. Hum. Genet.">
        <title>NDUFA2 complex I mutation leads to Leigh disease.</title>
        <authorList>
            <person name="Hoefs S.J."/>
            <person name="Dieteren C.E."/>
            <person name="Distelmaier F."/>
            <person name="Janssen R.J."/>
            <person name="Epplen A."/>
            <person name="Swarts H.G."/>
            <person name="Forkink M."/>
            <person name="Rodenburg R.J."/>
            <person name="Nijtmans L.G."/>
            <person name="Willems P.H."/>
            <person name="Smeitink J.A."/>
            <person name="van den Heuvel L.P."/>
        </authorList>
    </citation>
    <scope>INVOLVEMENT IN MC1DN13</scope>
</reference>
<reference key="10">
    <citation type="journal article" date="2009" name="Anal. Chem.">
        <title>Lys-N and trypsin cover complementary parts of the phosphoproteome in a refined SCX-based approach.</title>
        <authorList>
            <person name="Gauci S."/>
            <person name="Helbig A.O."/>
            <person name="Slijper M."/>
            <person name="Krijgsveld J."/>
            <person name="Heck A.J."/>
            <person name="Mohammed S."/>
        </authorList>
    </citation>
    <scope>ACETYLATION [LARGE SCALE ANALYSIS] AT ALA-2</scope>
    <scope>CLEAVAGE OF INITIATOR METHIONINE [LARGE SCALE ANALYSIS]</scope>
    <scope>IDENTIFICATION BY MASS SPECTROMETRY [LARGE SCALE ANALYSIS]</scope>
</reference>
<reference key="11">
    <citation type="journal article" date="2011" name="BMC Syst. Biol.">
        <title>Initial characterization of the human central proteome.</title>
        <authorList>
            <person name="Burkard T.R."/>
            <person name="Planyavsky M."/>
            <person name="Kaupe I."/>
            <person name="Breitwieser F.P."/>
            <person name="Buerckstuemmer T."/>
            <person name="Bennett K.L."/>
            <person name="Superti-Furga G."/>
            <person name="Colinge J."/>
        </authorList>
    </citation>
    <scope>IDENTIFICATION BY MASS SPECTROMETRY [LARGE SCALE ANALYSIS]</scope>
</reference>
<reference key="12">
    <citation type="journal article" date="2015" name="Proteomics">
        <title>N-terminome analysis of the human mitochondrial proteome.</title>
        <authorList>
            <person name="Vaca Jacome A.S."/>
            <person name="Rabilloud T."/>
            <person name="Schaeffer-Reiss C."/>
            <person name="Rompais M."/>
            <person name="Ayoub D."/>
            <person name="Lane L."/>
            <person name="Bairoch A."/>
            <person name="Van Dorsselaer A."/>
            <person name="Carapito C."/>
        </authorList>
    </citation>
    <scope>IDENTIFICATION BY MASS SPECTROMETRY [LARGE SCALE ANALYSIS]</scope>
</reference>
<reference key="13">
    <citation type="journal article" date="2016" name="Nature">
        <title>Accessory subunits are integral for assembly and function of human mitochondrial complex I.</title>
        <authorList>
            <person name="Stroud D.A."/>
            <person name="Surgenor E.E."/>
            <person name="Formosa L.E."/>
            <person name="Reljic B."/>
            <person name="Frazier A.E."/>
            <person name="Dibley M.G."/>
            <person name="Osellame L.D."/>
            <person name="Stait T."/>
            <person name="Beilharz T.H."/>
            <person name="Thorburn D.R."/>
            <person name="Salim A."/>
            <person name="Ryan M.T."/>
        </authorList>
    </citation>
    <scope>FUNCTION</scope>
    <scope>IDENTIFICATION IN THE NADH-UBIQUINONE OXIDOREDUCTASE COMPLEX</scope>
</reference>
<reference key="14">
    <citation type="journal article" date="2004" name="Structure">
        <title>The oxidized subunit B8 from human complex I adopts a thioredoxin fold.</title>
        <authorList>
            <person name="Brockmann C."/>
            <person name="Diehl A."/>
            <person name="Rehbein K."/>
            <person name="Strauss H."/>
            <person name="Schmieder P."/>
            <person name="Korn B."/>
            <person name="Kuhne R."/>
            <person name="Oschkinat H."/>
        </authorList>
    </citation>
    <scope>STRUCTURE BY NMR</scope>
    <scope>DISULFIDE BOND</scope>
</reference>
<reference key="15">
    <citation type="journal article" date="2006" name="Science">
        <title>The consensus coding sequences of human breast and colorectal cancers.</title>
        <authorList>
            <person name="Sjoeblom T."/>
            <person name="Jones S."/>
            <person name="Wood L.D."/>
            <person name="Parsons D.W."/>
            <person name="Lin J."/>
            <person name="Barber T.D."/>
            <person name="Mandelker D."/>
            <person name="Leary R.J."/>
            <person name="Ptak J."/>
            <person name="Silliman N."/>
            <person name="Szabo S."/>
            <person name="Buckhaults P."/>
            <person name="Farrell C."/>
            <person name="Meeh P."/>
            <person name="Markowitz S.D."/>
            <person name="Willis J."/>
            <person name="Dawson D."/>
            <person name="Willson J.K.V."/>
            <person name="Gazdar A.F."/>
            <person name="Hartigan J."/>
            <person name="Wu L."/>
            <person name="Liu C."/>
            <person name="Parmigiani G."/>
            <person name="Park B.H."/>
            <person name="Bachman K.E."/>
            <person name="Papadopoulos N."/>
            <person name="Vogelstein B."/>
            <person name="Kinzler K.W."/>
            <person name="Velculescu V.E."/>
        </authorList>
    </citation>
    <scope>VARIANT [LARGE SCALE ANALYSIS] ASN-50</scope>
</reference>
<feature type="initiator methionine" description="Removed" evidence="10">
    <location>
        <position position="1"/>
    </location>
</feature>
<feature type="chain" id="PRO_0000118789" description="NADH dehydrogenase [ubiquinone] 1 alpha subcomplex subunit 2">
    <location>
        <begin position="2"/>
        <end position="99"/>
    </location>
</feature>
<feature type="modified residue" description="N-acetylalanine" evidence="10">
    <location>
        <position position="2"/>
    </location>
</feature>
<feature type="modified residue" description="N6-acetyllysine; alternate" evidence="1">
    <location>
        <position position="64"/>
    </location>
</feature>
<feature type="modified residue" description="N6-succinyllysine; alternate" evidence="1">
    <location>
        <position position="64"/>
    </location>
</feature>
<feature type="disulfide bond" description="Redox-active" evidence="3">
    <location>
        <begin position="24"/>
        <end position="58"/>
    </location>
</feature>
<feature type="splice variant" id="VSP_045479" description="In isoform 2." evidence="7">
    <original>FGQETNVPLNNFSADQVTRALENVLSGKA</original>
    <variation>SRVQNS</variation>
    <location>
        <begin position="71"/>
        <end position="99"/>
    </location>
</feature>
<feature type="sequence variant" id="VAR_036174" description="In a breast cancer sample; somatic mutation." evidence="4">
    <original>D</original>
    <variation>N</variation>
    <location>
        <position position="50"/>
    </location>
</feature>
<feature type="strand" evidence="12">
    <location>
        <begin position="19"/>
        <end position="22"/>
    </location>
</feature>
<feature type="strand" evidence="11">
    <location>
        <begin position="25"/>
        <end position="27"/>
    </location>
</feature>
<feature type="helix" evidence="12">
    <location>
        <begin position="28"/>
        <end position="38"/>
    </location>
</feature>
<feature type="helix" evidence="12">
    <location>
        <begin position="41"/>
        <end position="47"/>
    </location>
</feature>
<feature type="strand" evidence="12">
    <location>
        <begin position="49"/>
        <end position="51"/>
    </location>
</feature>
<feature type="strand" evidence="12">
    <location>
        <begin position="53"/>
        <end position="56"/>
    </location>
</feature>
<feature type="strand" evidence="11">
    <location>
        <begin position="60"/>
        <end position="62"/>
    </location>
</feature>
<feature type="strand" evidence="12">
    <location>
        <begin position="64"/>
        <end position="68"/>
    </location>
</feature>
<feature type="helix" evidence="12">
    <location>
        <begin position="70"/>
        <end position="72"/>
    </location>
</feature>
<feature type="strand" evidence="12">
    <location>
        <begin position="74"/>
        <end position="76"/>
    </location>
</feature>
<feature type="helix" evidence="12">
    <location>
        <begin position="84"/>
        <end position="93"/>
    </location>
</feature>
<gene>
    <name type="primary">NDUFA2</name>
</gene>
<protein>
    <recommendedName>
        <fullName>NADH dehydrogenase [ubiquinone] 1 alpha subcomplex subunit 2</fullName>
    </recommendedName>
    <alternativeName>
        <fullName>Complex I-B8</fullName>
        <shortName>CI-B8</shortName>
    </alternativeName>
    <alternativeName>
        <fullName>NADH-ubiquinone oxidoreductase B8 subunit</fullName>
    </alternativeName>
</protein>
<keyword id="KW-0002">3D-structure</keyword>
<keyword id="KW-0007">Acetylation</keyword>
<keyword id="KW-0025">Alternative splicing</keyword>
<keyword id="KW-1015">Disulfide bond</keyword>
<keyword id="KW-0249">Electron transport</keyword>
<keyword id="KW-0472">Membrane</keyword>
<keyword id="KW-0496">Mitochondrion</keyword>
<keyword id="KW-0999">Mitochondrion inner membrane</keyword>
<keyword id="KW-1274">Primary mitochondrial disease</keyword>
<keyword id="KW-1267">Proteomics identification</keyword>
<keyword id="KW-1185">Reference proteome</keyword>
<keyword id="KW-0679">Respiratory chain</keyword>
<keyword id="KW-0813">Transport</keyword>
<organism>
    <name type="scientific">Homo sapiens</name>
    <name type="common">Human</name>
    <dbReference type="NCBI Taxonomy" id="9606"/>
    <lineage>
        <taxon>Eukaryota</taxon>
        <taxon>Metazoa</taxon>
        <taxon>Chordata</taxon>
        <taxon>Craniata</taxon>
        <taxon>Vertebrata</taxon>
        <taxon>Euteleostomi</taxon>
        <taxon>Mammalia</taxon>
        <taxon>Eutheria</taxon>
        <taxon>Euarchontoglires</taxon>
        <taxon>Primates</taxon>
        <taxon>Haplorrhini</taxon>
        <taxon>Catarrhini</taxon>
        <taxon>Hominidae</taxon>
        <taxon>Homo</taxon>
    </lineage>
</organism>
<dbReference type="EMBL" id="AF047185">
    <property type="protein sequence ID" value="AAC04270.1"/>
    <property type="molecule type" value="mRNA"/>
</dbReference>
<dbReference type="EMBL" id="AB054976">
    <property type="protein sequence ID" value="BAB21453.1"/>
    <property type="molecule type" value="Genomic_DNA"/>
</dbReference>
<dbReference type="EMBL" id="AF077029">
    <property type="protein sequence ID" value="AAD27762.1"/>
    <property type="molecule type" value="mRNA"/>
</dbReference>
<dbReference type="EMBL" id="AV705564">
    <property type="status" value="NOT_ANNOTATED_CDS"/>
    <property type="molecule type" value="mRNA"/>
</dbReference>
<dbReference type="EMBL" id="CR457016">
    <property type="protein sequence ID" value="CAG33297.1"/>
    <property type="molecule type" value="mRNA"/>
</dbReference>
<dbReference type="EMBL" id="AC116353">
    <property type="status" value="NOT_ANNOTATED_CDS"/>
    <property type="molecule type" value="Genomic_DNA"/>
</dbReference>
<dbReference type="EMBL" id="BC003674">
    <property type="protein sequence ID" value="AAH03674.1"/>
    <property type="molecule type" value="mRNA"/>
</dbReference>
<dbReference type="CCDS" id="CCDS4234.1">
    <molecule id="O43678-1"/>
</dbReference>
<dbReference type="CCDS" id="CCDS54911.1">
    <molecule id="O43678-2"/>
</dbReference>
<dbReference type="PIR" id="JC5824">
    <property type="entry name" value="JC5824"/>
</dbReference>
<dbReference type="RefSeq" id="NP_001171941.1">
    <molecule id="O43678-2"/>
    <property type="nucleotide sequence ID" value="NM_001185012.2"/>
</dbReference>
<dbReference type="RefSeq" id="NP_002479.1">
    <molecule id="O43678-1"/>
    <property type="nucleotide sequence ID" value="NM_002488.5"/>
</dbReference>
<dbReference type="PDB" id="1S3A">
    <property type="method" value="NMR"/>
    <property type="chains" value="A=1-99"/>
</dbReference>
<dbReference type="PDB" id="5XTB">
    <property type="method" value="EM"/>
    <property type="resolution" value="3.40 A"/>
    <property type="chains" value="F=14-96"/>
</dbReference>
<dbReference type="PDB" id="5XTD">
    <property type="method" value="EM"/>
    <property type="resolution" value="3.70 A"/>
    <property type="chains" value="F=14-96"/>
</dbReference>
<dbReference type="PDB" id="5XTH">
    <property type="method" value="EM"/>
    <property type="resolution" value="3.90 A"/>
    <property type="chains" value="F=14-96"/>
</dbReference>
<dbReference type="PDB" id="5XTI">
    <property type="method" value="EM"/>
    <property type="resolution" value="17.40 A"/>
    <property type="chains" value="BF/F=14-96"/>
</dbReference>
<dbReference type="PDBsum" id="1S3A"/>
<dbReference type="PDBsum" id="5XTB"/>
<dbReference type="PDBsum" id="5XTD"/>
<dbReference type="PDBsum" id="5XTH"/>
<dbReference type="PDBsum" id="5XTI"/>
<dbReference type="SMR" id="O43678"/>
<dbReference type="BioGRID" id="110775">
    <property type="interactions" value="228"/>
</dbReference>
<dbReference type="ComplexPortal" id="CPX-577">
    <property type="entry name" value="Mitochondrial respiratory chain complex I"/>
</dbReference>
<dbReference type="CORUM" id="O43678"/>
<dbReference type="FunCoup" id="O43678">
    <property type="interactions" value="1358"/>
</dbReference>
<dbReference type="IntAct" id="O43678">
    <property type="interactions" value="79"/>
</dbReference>
<dbReference type="MINT" id="O43678"/>
<dbReference type="STRING" id="9606.ENSP00000252102"/>
<dbReference type="BindingDB" id="O43678"/>
<dbReference type="ChEMBL" id="CHEMBL2363065"/>
<dbReference type="DrugBank" id="DB00157">
    <property type="generic name" value="NADH"/>
</dbReference>
<dbReference type="DrugCentral" id="O43678"/>
<dbReference type="GlyGen" id="O43678">
    <property type="glycosylation" value="1 site, 1 O-linked glycan (1 site)"/>
</dbReference>
<dbReference type="iPTMnet" id="O43678"/>
<dbReference type="PhosphoSitePlus" id="O43678"/>
<dbReference type="SwissPalm" id="O43678"/>
<dbReference type="BioMuta" id="NDUFA2"/>
<dbReference type="jPOST" id="O43678"/>
<dbReference type="MassIVE" id="O43678"/>
<dbReference type="PaxDb" id="9606-ENSP00000252102"/>
<dbReference type="PeptideAtlas" id="O43678"/>
<dbReference type="ProteomicsDB" id="15115"/>
<dbReference type="ProteomicsDB" id="49106">
    <molecule id="O43678-1"/>
</dbReference>
<dbReference type="Pumba" id="O43678"/>
<dbReference type="TopDownProteomics" id="O43678-1">
    <molecule id="O43678-1"/>
</dbReference>
<dbReference type="Antibodypedia" id="15357">
    <property type="antibodies" value="128 antibodies from 25 providers"/>
</dbReference>
<dbReference type="DNASU" id="4695"/>
<dbReference type="Ensembl" id="ENST00000252102.9">
    <molecule id="O43678-1"/>
    <property type="protein sequence ID" value="ENSP00000252102.5"/>
    <property type="gene ID" value="ENSG00000131495.9"/>
</dbReference>
<dbReference type="Ensembl" id="ENST00000512088.1">
    <molecule id="O43678-2"/>
    <property type="protein sequence ID" value="ENSP00000427220.1"/>
    <property type="gene ID" value="ENSG00000131495.9"/>
</dbReference>
<dbReference type="GeneID" id="4695"/>
<dbReference type="KEGG" id="hsa:4695"/>
<dbReference type="MANE-Select" id="ENST00000252102.9">
    <property type="protein sequence ID" value="ENSP00000252102.5"/>
    <property type="RefSeq nucleotide sequence ID" value="NM_002488.5"/>
    <property type="RefSeq protein sequence ID" value="NP_002479.1"/>
</dbReference>
<dbReference type="UCSC" id="uc003lgp.4">
    <molecule id="O43678-1"/>
    <property type="organism name" value="human"/>
</dbReference>
<dbReference type="AGR" id="HGNC:7685"/>
<dbReference type="CTD" id="4695"/>
<dbReference type="DisGeNET" id="4695"/>
<dbReference type="GeneCards" id="NDUFA2"/>
<dbReference type="HGNC" id="HGNC:7685">
    <property type="gene designation" value="NDUFA2"/>
</dbReference>
<dbReference type="HPA" id="ENSG00000131495">
    <property type="expression patterns" value="Low tissue specificity"/>
</dbReference>
<dbReference type="MalaCards" id="NDUFA2"/>
<dbReference type="MIM" id="602137">
    <property type="type" value="gene"/>
</dbReference>
<dbReference type="MIM" id="618235">
    <property type="type" value="phenotype"/>
</dbReference>
<dbReference type="neXtProt" id="NX_O43678"/>
<dbReference type="OpenTargets" id="ENSG00000131495"/>
<dbReference type="Orphanet" id="85136">
    <property type="disease" value="Cystic leukoencephalopathy without megalencephaly"/>
</dbReference>
<dbReference type="PharmGKB" id="PA31491"/>
<dbReference type="VEuPathDB" id="HostDB:ENSG00000131495"/>
<dbReference type="eggNOG" id="KOG3446">
    <property type="taxonomic scope" value="Eukaryota"/>
</dbReference>
<dbReference type="GeneTree" id="ENSGT00390000006178"/>
<dbReference type="HOGENOM" id="CLU_110897_0_0_1"/>
<dbReference type="InParanoid" id="O43678"/>
<dbReference type="OMA" id="RIHLCQH"/>
<dbReference type="OrthoDB" id="10250268at2759"/>
<dbReference type="PAN-GO" id="O43678">
    <property type="GO annotations" value="1 GO annotation based on evolutionary models"/>
</dbReference>
<dbReference type="PhylomeDB" id="O43678"/>
<dbReference type="TreeFam" id="TF300229"/>
<dbReference type="BioCyc" id="MetaCyc:HS05539-MONOMER"/>
<dbReference type="PathwayCommons" id="O43678"/>
<dbReference type="Reactome" id="R-HSA-611105">
    <property type="pathway name" value="Respiratory electron transport"/>
</dbReference>
<dbReference type="Reactome" id="R-HSA-6799198">
    <property type="pathway name" value="Complex I biogenesis"/>
</dbReference>
<dbReference type="Reactome" id="R-HSA-9837999">
    <property type="pathway name" value="Mitochondrial protein degradation"/>
</dbReference>
<dbReference type="SignaLink" id="O43678"/>
<dbReference type="SIGNOR" id="O43678"/>
<dbReference type="BioGRID-ORCS" id="4695">
    <property type="hits" value="285 hits in 1165 CRISPR screens"/>
</dbReference>
<dbReference type="CD-CODE" id="FB4E32DD">
    <property type="entry name" value="Presynaptic clusters and postsynaptic densities"/>
</dbReference>
<dbReference type="ChiTaRS" id="NDUFA2">
    <property type="organism name" value="human"/>
</dbReference>
<dbReference type="EvolutionaryTrace" id="O43678"/>
<dbReference type="GeneWiki" id="NDUFA2"/>
<dbReference type="GenomeRNAi" id="4695"/>
<dbReference type="Pharos" id="O43678">
    <property type="development level" value="Tclin"/>
</dbReference>
<dbReference type="PRO" id="PR:O43678"/>
<dbReference type="Proteomes" id="UP000005640">
    <property type="component" value="Chromosome 5"/>
</dbReference>
<dbReference type="RNAct" id="O43678">
    <property type="molecule type" value="protein"/>
</dbReference>
<dbReference type="Bgee" id="ENSG00000131495">
    <property type="expression patterns" value="Expressed in biceps brachii and 213 other cell types or tissues"/>
</dbReference>
<dbReference type="GO" id="GO:0005743">
    <property type="term" value="C:mitochondrial inner membrane"/>
    <property type="evidence" value="ECO:0000314"/>
    <property type="project" value="ComplexPortal"/>
</dbReference>
<dbReference type="GO" id="GO:0031966">
    <property type="term" value="C:mitochondrial membrane"/>
    <property type="evidence" value="ECO:0000314"/>
    <property type="project" value="UniProtKB"/>
</dbReference>
<dbReference type="GO" id="GO:0005739">
    <property type="term" value="C:mitochondrion"/>
    <property type="evidence" value="ECO:0006056"/>
    <property type="project" value="FlyBase"/>
</dbReference>
<dbReference type="GO" id="GO:0045271">
    <property type="term" value="C:respiratory chain complex I"/>
    <property type="evidence" value="ECO:0000314"/>
    <property type="project" value="UniProtKB"/>
</dbReference>
<dbReference type="GO" id="GO:0008137">
    <property type="term" value="F:NADH dehydrogenase (ubiquinone) activity"/>
    <property type="evidence" value="ECO:0000303"/>
    <property type="project" value="UniProtKB"/>
</dbReference>
<dbReference type="GO" id="GO:0009060">
    <property type="term" value="P:aerobic respiration"/>
    <property type="evidence" value="ECO:0000303"/>
    <property type="project" value="ComplexPortal"/>
</dbReference>
<dbReference type="GO" id="GO:0001835">
    <property type="term" value="P:blastocyst hatching"/>
    <property type="evidence" value="ECO:0007669"/>
    <property type="project" value="Ensembl"/>
</dbReference>
<dbReference type="GO" id="GO:0006120">
    <property type="term" value="P:mitochondrial electron transport, NADH to ubiquinone"/>
    <property type="evidence" value="ECO:0000303"/>
    <property type="project" value="UniProtKB"/>
</dbReference>
<dbReference type="GO" id="GO:0042776">
    <property type="term" value="P:proton motive force-driven mitochondrial ATP synthesis"/>
    <property type="evidence" value="ECO:0000303"/>
    <property type="project" value="ComplexPortal"/>
</dbReference>
<dbReference type="FunFam" id="3.40.30.10:FF:000127">
    <property type="entry name" value="NADH dehydrogenase [ubiquinone] 1 alpha subcomplex subunit 2"/>
    <property type="match status" value="1"/>
</dbReference>
<dbReference type="Gene3D" id="3.40.30.10">
    <property type="entry name" value="Glutaredoxin"/>
    <property type="match status" value="1"/>
</dbReference>
<dbReference type="InterPro" id="IPR016464">
    <property type="entry name" value="NADH_Ub_cplx-1_asu_su-2"/>
</dbReference>
<dbReference type="InterPro" id="IPR007741">
    <property type="entry name" value="Ribosomal_mL43/mS25/NADH_DH"/>
</dbReference>
<dbReference type="InterPro" id="IPR036249">
    <property type="entry name" value="Thioredoxin-like_sf"/>
</dbReference>
<dbReference type="PANTHER" id="PTHR12878:SF6">
    <property type="entry name" value="NADH DEHYDROGENASE [UBIQUINONE] 1 ALPHA SUBCOMPLEX SUBUNIT 2"/>
    <property type="match status" value="1"/>
</dbReference>
<dbReference type="PANTHER" id="PTHR12878">
    <property type="entry name" value="NADH-UBIQUINONE OXIDOREDUCTASE B8 SUBUNIT"/>
    <property type="match status" value="1"/>
</dbReference>
<dbReference type="Pfam" id="PF05047">
    <property type="entry name" value="L51_S25_CI-B8"/>
    <property type="match status" value="1"/>
</dbReference>
<dbReference type="PIRSF" id="PIRSF005822">
    <property type="entry name" value="NDUA2"/>
    <property type="match status" value="1"/>
</dbReference>
<dbReference type="SMART" id="SM00916">
    <property type="entry name" value="L51_S25_CI-B8"/>
    <property type="match status" value="1"/>
</dbReference>
<dbReference type="SUPFAM" id="SSF52833">
    <property type="entry name" value="Thioredoxin-like"/>
    <property type="match status" value="1"/>
</dbReference>
<proteinExistence type="evidence at protein level"/>
<accession>O43678</accession>
<accession>D6RJD6</accession>
<accession>Q6IAY8</accession>